<reference key="1">
    <citation type="journal article" date="2003" name="Proc. Natl. Acad. Sci. U.S.A.">
        <title>Comparative sequencing of human and chimpanzee MHC class I regions unveils insertions/deletions as the major path to genomic divergence.</title>
        <authorList>
            <person name="Anzai T."/>
            <person name="Shiina T."/>
            <person name="Kimura N."/>
            <person name="Yanagiya K."/>
            <person name="Kohara S."/>
            <person name="Shigenari A."/>
            <person name="Yamagata T."/>
            <person name="Kulski J.K."/>
            <person name="Naruse T.K."/>
            <person name="Fujimori Y."/>
            <person name="Fukuzumi Y."/>
            <person name="Yamazaki M."/>
            <person name="Tashiro H."/>
            <person name="Iwamoto C."/>
            <person name="Umehara Y."/>
            <person name="Imanishi T."/>
            <person name="Meyer A."/>
            <person name="Ikeo K."/>
            <person name="Gojobori T."/>
            <person name="Bahram S."/>
            <person name="Inoko H."/>
        </authorList>
    </citation>
    <scope>NUCLEOTIDE SEQUENCE [LARGE SCALE GENOMIC DNA]</scope>
</reference>
<reference key="2">
    <citation type="journal article" date="2006" name="Genetics">
        <title>Rapid evolution of major histocompatibility complex class I genes in primates generates new disease alleles in humans via hitchhiking diversity.</title>
        <authorList>
            <person name="Shiina T."/>
            <person name="Ota M."/>
            <person name="Shimizu S."/>
            <person name="Katsuyama Y."/>
            <person name="Hashimoto N."/>
            <person name="Takasu M."/>
            <person name="Anzai T."/>
            <person name="Kulski J.K."/>
            <person name="Kikkawa E."/>
            <person name="Naruse T."/>
            <person name="Kimura N."/>
            <person name="Yanagiya K."/>
            <person name="Watanabe A."/>
            <person name="Hosomichi K."/>
            <person name="Kohara S."/>
            <person name="Iwamoto C."/>
            <person name="Umehara Y."/>
            <person name="Meyer A."/>
            <person name="Wanner V."/>
            <person name="Sano K."/>
            <person name="Macquin C."/>
            <person name="Ikeo K."/>
            <person name="Tokunaga K."/>
            <person name="Gojobori T."/>
            <person name="Inoko H."/>
            <person name="Bahram S."/>
        </authorList>
    </citation>
    <scope>NUCLEOTIDE SEQUENCE [LARGE SCALE GENOMIC DNA]</scope>
</reference>
<organism>
    <name type="scientific">Pan troglodytes</name>
    <name type="common">Chimpanzee</name>
    <dbReference type="NCBI Taxonomy" id="9598"/>
    <lineage>
        <taxon>Eukaryota</taxon>
        <taxon>Metazoa</taxon>
        <taxon>Chordata</taxon>
        <taxon>Craniata</taxon>
        <taxon>Vertebrata</taxon>
        <taxon>Euteleostomi</taxon>
        <taxon>Mammalia</taxon>
        <taxon>Eutheria</taxon>
        <taxon>Euarchontoglires</taxon>
        <taxon>Primates</taxon>
        <taxon>Haplorrhini</taxon>
        <taxon>Catarrhini</taxon>
        <taxon>Hominidae</taxon>
        <taxon>Pan</taxon>
    </lineage>
</organism>
<comment type="function">
    <text evidence="1">Potential transcription factor that may play a role in the regulation of genes involved in cell cycle G1/S transition (By similarity). May bind to regulatory elements of genes, including the promoter of the transcription factor FOXO1 (By similarity).</text>
</comment>
<comment type="subcellular location">
    <subcellularLocation>
        <location evidence="1">Nucleus</location>
    </subcellularLocation>
</comment>
<protein>
    <recommendedName>
        <fullName>Transcription factor 19</fullName>
        <shortName>TCF-19</shortName>
    </recommendedName>
    <alternativeName>
        <fullName>Transcription factor SC1</fullName>
    </alternativeName>
</protein>
<accession>Q7YR48</accession>
<accession>Q1XHV3</accession>
<accession>Q1XHV5</accession>
<sequence>MLPCFQLLRIGGGRGGDLYTFHPPAGAGCTYRLGHRADLCDVALRPQQEPGLISGIHAELHAEPRGDDWRVSLEDHSSQGTLVNNVRLPRGHRLELSDGDLLTFGPEGPPGTSPSEFYFMFQQVRVKPQDFAAITIPRSRGEARVGAGFRPMLPSQGAPQRPLSTLSPAPKATLILNSIGSLSKLRPQPLTFSPSWGGPKSLPVPAPPGEVGTTPSAPPQRNRRKSVHRVLAELDDESEPPENPPPVLMERRKKLRVDKAPLTPTGNRRGRPRKYPVSAPVAPPAVGGGEPCAAPCCCLPQEETVAWVQCDGCDVWFHVACVGCSIQAAREADFRCPGCRAGIQT</sequence>
<proteinExistence type="inferred from homology"/>
<dbReference type="EMBL" id="BA000041">
    <property type="protein sequence ID" value="BAC78166.1"/>
    <property type="molecule type" value="Genomic_DNA"/>
</dbReference>
<dbReference type="EMBL" id="AB210197">
    <property type="protein sequence ID" value="BAE92815.1"/>
    <property type="molecule type" value="Genomic_DNA"/>
</dbReference>
<dbReference type="EMBL" id="AB210198">
    <property type="protein sequence ID" value="BAE92817.1"/>
    <property type="molecule type" value="Genomic_DNA"/>
</dbReference>
<dbReference type="RefSeq" id="NP_001129081.1">
    <property type="nucleotide sequence ID" value="NM_001135609.1"/>
</dbReference>
<dbReference type="RefSeq" id="XP_009449065.1">
    <property type="nucleotide sequence ID" value="XM_009450790.2"/>
</dbReference>
<dbReference type="RefSeq" id="XP_009449066.1">
    <property type="nucleotide sequence ID" value="XM_009450791.2"/>
</dbReference>
<dbReference type="SMR" id="Q7YR48"/>
<dbReference type="FunCoup" id="Q7YR48">
    <property type="interactions" value="920"/>
</dbReference>
<dbReference type="STRING" id="9598.ENSPTRP00000043439"/>
<dbReference type="PaxDb" id="9598-ENSPTRP00000043439"/>
<dbReference type="Ensembl" id="ENSPTRT00000045450.5">
    <property type="protein sequence ID" value="ENSPTRP00000043439.4"/>
    <property type="gene ID" value="ENSPTRG00000017952.7"/>
</dbReference>
<dbReference type="GeneID" id="100190896"/>
<dbReference type="KEGG" id="ptr:100190896"/>
<dbReference type="CTD" id="6941"/>
<dbReference type="VGNC" id="VGNC:12712">
    <property type="gene designation" value="TCF19"/>
</dbReference>
<dbReference type="eggNOG" id="ENOG502RHCY">
    <property type="taxonomic scope" value="Eukaryota"/>
</dbReference>
<dbReference type="GeneTree" id="ENSGT00390000015391"/>
<dbReference type="HOGENOM" id="CLU_041089_0_0_1"/>
<dbReference type="InParanoid" id="Q7YR48"/>
<dbReference type="OMA" id="IWFHVAC"/>
<dbReference type="OrthoDB" id="13448at9604"/>
<dbReference type="TreeFam" id="TF334697"/>
<dbReference type="Proteomes" id="UP000002277">
    <property type="component" value="Chromosome 6"/>
</dbReference>
<dbReference type="Bgee" id="ENSPTRG00000017952">
    <property type="expression patterns" value="Expressed in fibroblast and 16 other cell types or tissues"/>
</dbReference>
<dbReference type="GO" id="GO:0005634">
    <property type="term" value="C:nucleus"/>
    <property type="evidence" value="ECO:0000318"/>
    <property type="project" value="GO_Central"/>
</dbReference>
<dbReference type="GO" id="GO:0008270">
    <property type="term" value="F:zinc ion binding"/>
    <property type="evidence" value="ECO:0007669"/>
    <property type="project" value="UniProtKB-KW"/>
</dbReference>
<dbReference type="GO" id="GO:0010468">
    <property type="term" value="P:regulation of gene expression"/>
    <property type="evidence" value="ECO:0000318"/>
    <property type="project" value="GO_Central"/>
</dbReference>
<dbReference type="CDD" id="cd22685">
    <property type="entry name" value="FHA_TCF19"/>
    <property type="match status" value="1"/>
</dbReference>
<dbReference type="CDD" id="cd15609">
    <property type="entry name" value="PHD_TCF19"/>
    <property type="match status" value="1"/>
</dbReference>
<dbReference type="Gene3D" id="2.60.200.20">
    <property type="match status" value="1"/>
</dbReference>
<dbReference type="Gene3D" id="3.30.40.10">
    <property type="entry name" value="Zinc/RING finger domain, C3HC4 (zinc finger)"/>
    <property type="match status" value="1"/>
</dbReference>
<dbReference type="InterPro" id="IPR000253">
    <property type="entry name" value="FHA_dom"/>
</dbReference>
<dbReference type="InterPro" id="IPR008984">
    <property type="entry name" value="SMAD_FHA_dom_sf"/>
</dbReference>
<dbReference type="InterPro" id="IPR042803">
    <property type="entry name" value="TCF19"/>
</dbReference>
<dbReference type="InterPro" id="IPR039095">
    <property type="entry name" value="TCF19_PHD"/>
</dbReference>
<dbReference type="InterPro" id="IPR019786">
    <property type="entry name" value="Zinc_finger_PHD-type_CS"/>
</dbReference>
<dbReference type="InterPro" id="IPR011011">
    <property type="entry name" value="Znf_FYVE_PHD"/>
</dbReference>
<dbReference type="InterPro" id="IPR001965">
    <property type="entry name" value="Znf_PHD"/>
</dbReference>
<dbReference type="InterPro" id="IPR019787">
    <property type="entry name" value="Znf_PHD-finger"/>
</dbReference>
<dbReference type="InterPro" id="IPR013083">
    <property type="entry name" value="Znf_RING/FYVE/PHD"/>
</dbReference>
<dbReference type="PANTHER" id="PTHR15464">
    <property type="entry name" value="TRANSCRIPTION FACTOR 19"/>
    <property type="match status" value="1"/>
</dbReference>
<dbReference type="PANTHER" id="PTHR15464:SF1">
    <property type="entry name" value="TRANSCRIPTION FACTOR 19"/>
    <property type="match status" value="1"/>
</dbReference>
<dbReference type="Pfam" id="PF00498">
    <property type="entry name" value="FHA"/>
    <property type="match status" value="1"/>
</dbReference>
<dbReference type="Pfam" id="PF00628">
    <property type="entry name" value="PHD"/>
    <property type="match status" value="1"/>
</dbReference>
<dbReference type="SMART" id="SM00240">
    <property type="entry name" value="FHA"/>
    <property type="match status" value="1"/>
</dbReference>
<dbReference type="SMART" id="SM00249">
    <property type="entry name" value="PHD"/>
    <property type="match status" value="1"/>
</dbReference>
<dbReference type="SUPFAM" id="SSF57903">
    <property type="entry name" value="FYVE/PHD zinc finger"/>
    <property type="match status" value="1"/>
</dbReference>
<dbReference type="SUPFAM" id="SSF49879">
    <property type="entry name" value="SMAD/FHA domain"/>
    <property type="match status" value="1"/>
</dbReference>
<dbReference type="PROSITE" id="PS50006">
    <property type="entry name" value="FHA_DOMAIN"/>
    <property type="match status" value="1"/>
</dbReference>
<dbReference type="PROSITE" id="PS01359">
    <property type="entry name" value="ZF_PHD_1"/>
    <property type="match status" value="1"/>
</dbReference>
<gene>
    <name type="primary">TCF19</name>
    <name type="synonym">SC1</name>
</gene>
<evidence type="ECO:0000250" key="1">
    <source>
        <dbReference type="UniProtKB" id="Q9Y242"/>
    </source>
</evidence>
<evidence type="ECO:0000255" key="2">
    <source>
        <dbReference type="PROSITE-ProRule" id="PRU00086"/>
    </source>
</evidence>
<evidence type="ECO:0000255" key="3">
    <source>
        <dbReference type="PROSITE-ProRule" id="PRU00146"/>
    </source>
</evidence>
<evidence type="ECO:0000256" key="4">
    <source>
        <dbReference type="SAM" id="MobiDB-lite"/>
    </source>
</evidence>
<keyword id="KW-0479">Metal-binding</keyword>
<keyword id="KW-0539">Nucleus</keyword>
<keyword id="KW-0597">Phosphoprotein</keyword>
<keyword id="KW-1185">Reference proteome</keyword>
<keyword id="KW-0804">Transcription</keyword>
<keyword id="KW-0805">Transcription regulation</keyword>
<keyword id="KW-0862">Zinc</keyword>
<keyword id="KW-0863">Zinc-finger</keyword>
<name>TCF19_PANTR</name>
<feature type="chain" id="PRO_0000059328" description="Transcription factor 19">
    <location>
        <begin position="1"/>
        <end position="345"/>
    </location>
</feature>
<feature type="domain" description="FHA" evidence="2">
    <location>
        <begin position="31"/>
        <end position="88"/>
    </location>
</feature>
<feature type="zinc finger region" description="PHD-type" evidence="3">
    <location>
        <begin position="293"/>
        <end position="342"/>
    </location>
</feature>
<feature type="region of interest" description="Disordered" evidence="4">
    <location>
        <begin position="147"/>
        <end position="167"/>
    </location>
</feature>
<feature type="region of interest" description="Disordered" evidence="4">
    <location>
        <begin position="190"/>
        <end position="227"/>
    </location>
</feature>
<feature type="binding site" evidence="3">
    <location>
        <position position="296"/>
    </location>
    <ligand>
        <name>Zn(2+)</name>
        <dbReference type="ChEBI" id="CHEBI:29105"/>
        <label>1</label>
    </ligand>
</feature>
<feature type="binding site" evidence="3">
    <location>
        <position position="298"/>
    </location>
    <ligand>
        <name>Zn(2+)</name>
        <dbReference type="ChEBI" id="CHEBI:29105"/>
        <label>1</label>
    </ligand>
</feature>
<feature type="binding site" evidence="3">
    <location>
        <position position="310"/>
    </location>
    <ligand>
        <name>Zn(2+)</name>
        <dbReference type="ChEBI" id="CHEBI:29105"/>
        <label>2</label>
    </ligand>
</feature>
<feature type="binding site" evidence="3">
    <location>
        <position position="313"/>
    </location>
    <ligand>
        <name>Zn(2+)</name>
        <dbReference type="ChEBI" id="CHEBI:29105"/>
        <label>2</label>
    </ligand>
</feature>
<feature type="binding site" evidence="3">
    <location>
        <position position="318"/>
    </location>
    <ligand>
        <name>Zn(2+)</name>
        <dbReference type="ChEBI" id="CHEBI:29105"/>
        <label>1</label>
    </ligand>
</feature>
<feature type="binding site" evidence="3">
    <location>
        <position position="321"/>
    </location>
    <ligand>
        <name>Zn(2+)</name>
        <dbReference type="ChEBI" id="CHEBI:29105"/>
        <label>1</label>
    </ligand>
</feature>
<feature type="binding site" evidence="3">
    <location>
        <position position="336"/>
    </location>
    <ligand>
        <name>Zn(2+)</name>
        <dbReference type="ChEBI" id="CHEBI:29105"/>
        <label>2</label>
    </ligand>
</feature>
<feature type="binding site" evidence="3">
    <location>
        <position position="339"/>
    </location>
    <ligand>
        <name>Zn(2+)</name>
        <dbReference type="ChEBI" id="CHEBI:29105"/>
        <label>2</label>
    </ligand>
</feature>
<feature type="modified residue" description="Phosphoserine" evidence="1">
    <location>
        <position position="78"/>
    </location>
</feature>